<name>VATL4_ARATH</name>
<reference key="1">
    <citation type="journal article" date="1995" name="Plant Mol. Biol.">
        <title>Several distinct genes encode nearly identical to 16 kDa proteolipids of the vacuolar H(+)-ATPase from Arabidopsis thaliana.</title>
        <authorList>
            <person name="Perera I.Y."/>
            <person name="Li X."/>
            <person name="Sze H."/>
        </authorList>
    </citation>
    <scope>NUCLEOTIDE SEQUENCE [MRNA]</scope>
    <source>
        <strain>cv. Columbia</strain>
    </source>
</reference>
<reference key="2">
    <citation type="online journal article" date="1999" name="Plant Gene Register">
        <title>Cloning and characterization of a genomic clone encoding a 16 kDa subunit c of Vacuolar H+-ATPase (Ava-p4) from Arabidopsis thaliana.</title>
        <authorList>
            <person name="Li X."/>
            <person name="Perera I.Y."/>
            <person name="Lin X."/>
            <person name="Sze H."/>
        </authorList>
        <locator>PGR99-106</locator>
    </citation>
    <scope>NUCLEOTIDE SEQUENCE [GENOMIC DNA]</scope>
    <source>
        <strain>cv. Columbia</strain>
    </source>
</reference>
<reference key="3">
    <citation type="journal article" date="2000" name="Nature">
        <title>Sequence and analysis of chromosome 1 of the plant Arabidopsis thaliana.</title>
        <authorList>
            <person name="Theologis A."/>
            <person name="Ecker J.R."/>
            <person name="Palm C.J."/>
            <person name="Federspiel N.A."/>
            <person name="Kaul S."/>
            <person name="White O."/>
            <person name="Alonso J."/>
            <person name="Altafi H."/>
            <person name="Araujo R."/>
            <person name="Bowman C.L."/>
            <person name="Brooks S.Y."/>
            <person name="Buehler E."/>
            <person name="Chan A."/>
            <person name="Chao Q."/>
            <person name="Chen H."/>
            <person name="Cheuk R.F."/>
            <person name="Chin C.W."/>
            <person name="Chung M.K."/>
            <person name="Conn L."/>
            <person name="Conway A.B."/>
            <person name="Conway A.R."/>
            <person name="Creasy T.H."/>
            <person name="Dewar K."/>
            <person name="Dunn P."/>
            <person name="Etgu P."/>
            <person name="Feldblyum T.V."/>
            <person name="Feng J.-D."/>
            <person name="Fong B."/>
            <person name="Fujii C.Y."/>
            <person name="Gill J.E."/>
            <person name="Goldsmith A.D."/>
            <person name="Haas B."/>
            <person name="Hansen N.F."/>
            <person name="Hughes B."/>
            <person name="Huizar L."/>
            <person name="Hunter J.L."/>
            <person name="Jenkins J."/>
            <person name="Johnson-Hopson C."/>
            <person name="Khan S."/>
            <person name="Khaykin E."/>
            <person name="Kim C.J."/>
            <person name="Koo H.L."/>
            <person name="Kremenetskaia I."/>
            <person name="Kurtz D.B."/>
            <person name="Kwan A."/>
            <person name="Lam B."/>
            <person name="Langin-Hooper S."/>
            <person name="Lee A."/>
            <person name="Lee J.M."/>
            <person name="Lenz C.A."/>
            <person name="Li J.H."/>
            <person name="Li Y.-P."/>
            <person name="Lin X."/>
            <person name="Liu S.X."/>
            <person name="Liu Z.A."/>
            <person name="Luros J.S."/>
            <person name="Maiti R."/>
            <person name="Marziali A."/>
            <person name="Militscher J."/>
            <person name="Miranda M."/>
            <person name="Nguyen M."/>
            <person name="Nierman W.C."/>
            <person name="Osborne B.I."/>
            <person name="Pai G."/>
            <person name="Peterson J."/>
            <person name="Pham P.K."/>
            <person name="Rizzo M."/>
            <person name="Rooney T."/>
            <person name="Rowley D."/>
            <person name="Sakano H."/>
            <person name="Salzberg S.L."/>
            <person name="Schwartz J.R."/>
            <person name="Shinn P."/>
            <person name="Southwick A.M."/>
            <person name="Sun H."/>
            <person name="Tallon L.J."/>
            <person name="Tambunga G."/>
            <person name="Toriumi M.J."/>
            <person name="Town C.D."/>
            <person name="Utterback T."/>
            <person name="Van Aken S."/>
            <person name="Vaysberg M."/>
            <person name="Vysotskaia V.S."/>
            <person name="Walker M."/>
            <person name="Wu D."/>
            <person name="Yu G."/>
            <person name="Fraser C.M."/>
            <person name="Venter J.C."/>
            <person name="Davis R.W."/>
        </authorList>
    </citation>
    <scope>NUCLEOTIDE SEQUENCE [LARGE SCALE GENOMIC DNA]</scope>
    <source>
        <strain>cv. Columbia</strain>
    </source>
</reference>
<reference key="4">
    <citation type="journal article" date="2017" name="Plant J.">
        <title>Araport11: a complete reannotation of the Arabidopsis thaliana reference genome.</title>
        <authorList>
            <person name="Cheng C.Y."/>
            <person name="Krishnakumar V."/>
            <person name="Chan A.P."/>
            <person name="Thibaud-Nissen F."/>
            <person name="Schobel S."/>
            <person name="Town C.D."/>
        </authorList>
    </citation>
    <scope>GENOME REANNOTATION</scope>
    <source>
        <strain>cv. Columbia</strain>
    </source>
</reference>
<reference key="5">
    <citation type="journal article" date="2003" name="Science">
        <title>Empirical analysis of transcriptional activity in the Arabidopsis genome.</title>
        <authorList>
            <person name="Yamada K."/>
            <person name="Lim J."/>
            <person name="Dale J.M."/>
            <person name="Chen H."/>
            <person name="Shinn P."/>
            <person name="Palm C.J."/>
            <person name="Southwick A.M."/>
            <person name="Wu H.C."/>
            <person name="Kim C.J."/>
            <person name="Nguyen M."/>
            <person name="Pham P.K."/>
            <person name="Cheuk R.F."/>
            <person name="Karlin-Newmann G."/>
            <person name="Liu S.X."/>
            <person name="Lam B."/>
            <person name="Sakano H."/>
            <person name="Wu T."/>
            <person name="Yu G."/>
            <person name="Miranda M."/>
            <person name="Quach H.L."/>
            <person name="Tripp M."/>
            <person name="Chang C.H."/>
            <person name="Lee J.M."/>
            <person name="Toriumi M.J."/>
            <person name="Chan M.M."/>
            <person name="Tang C.C."/>
            <person name="Onodera C.S."/>
            <person name="Deng J.M."/>
            <person name="Akiyama K."/>
            <person name="Ansari Y."/>
            <person name="Arakawa T."/>
            <person name="Banh J."/>
            <person name="Banno F."/>
            <person name="Bowser L."/>
            <person name="Brooks S.Y."/>
            <person name="Carninci P."/>
            <person name="Chao Q."/>
            <person name="Choy N."/>
            <person name="Enju A."/>
            <person name="Goldsmith A.D."/>
            <person name="Gurjal M."/>
            <person name="Hansen N.F."/>
            <person name="Hayashizaki Y."/>
            <person name="Johnson-Hopson C."/>
            <person name="Hsuan V.W."/>
            <person name="Iida K."/>
            <person name="Karnes M."/>
            <person name="Khan S."/>
            <person name="Koesema E."/>
            <person name="Ishida J."/>
            <person name="Jiang P.X."/>
            <person name="Jones T."/>
            <person name="Kawai J."/>
            <person name="Kamiya A."/>
            <person name="Meyers C."/>
            <person name="Nakajima M."/>
            <person name="Narusaka M."/>
            <person name="Seki M."/>
            <person name="Sakurai T."/>
            <person name="Satou M."/>
            <person name="Tamse R."/>
            <person name="Vaysberg M."/>
            <person name="Wallender E.K."/>
            <person name="Wong C."/>
            <person name="Yamamura Y."/>
            <person name="Yuan S."/>
            <person name="Shinozaki K."/>
            <person name="Davis R.W."/>
            <person name="Theologis A."/>
            <person name="Ecker J.R."/>
        </authorList>
    </citation>
    <scope>NUCLEOTIDE SEQUENCE [LARGE SCALE MRNA]</scope>
    <source>
        <strain>cv. Columbia</strain>
    </source>
</reference>
<reference key="6">
    <citation type="journal article" date="2002" name="Trends Plant Sci.">
        <title>A simple nomenclature for a complex proton pump: VHA genes encode the vacuolar H(+)-ATPase.</title>
        <authorList>
            <person name="Sze H."/>
            <person name="Schumacher K."/>
            <person name="Mueller M.L."/>
            <person name="Padmanaban S."/>
            <person name="Taiz L."/>
        </authorList>
    </citation>
    <scope>GENE FAMILY</scope>
    <scope>NOMENCLATURE</scope>
</reference>
<reference key="7">
    <citation type="journal article" date="2012" name="J. Integr. Plant Biol.">
        <title>Four closely-related RING-type E3 ligases, APD1-4, are involved in pollen mitosis II regulation in Arabidopsis.</title>
        <authorList>
            <person name="Luo G."/>
            <person name="Gu H."/>
            <person name="Liu J."/>
            <person name="Qu L.-J."/>
        </authorList>
    </citation>
    <scope>INTERACTION WITH APD2</scope>
    <source>
        <strain>cv. Columbia</strain>
    </source>
</reference>
<protein>
    <recommendedName>
        <fullName>V-type proton ATPase subunit c4</fullName>
        <shortName>V-ATPase subunit c4</shortName>
    </recommendedName>
    <alternativeName>
        <fullName>V-type proton ATPase 16 kDa proteolipid subunit c4</fullName>
        <shortName>V-ATPase 16 kDa proteolipid subunit c4</shortName>
    </alternativeName>
    <alternativeName>
        <fullName>Vacuolar H(+)-ATPase subunit c isoform 4</fullName>
    </alternativeName>
    <alternativeName>
        <fullName>Vacuolar proton pump 16 kDa proteolipid subunit c4</fullName>
    </alternativeName>
    <alternativeName>
        <fullName>Vacuolar proton pump subunit c4</fullName>
    </alternativeName>
</protein>
<comment type="function">
    <text>Proton-conducting pore forming subunit of the membrane integral V0 complex of vacuolar ATPase. V-ATPase is responsible for acidifying a variety of intracellular compartments in eukaryotic cells.</text>
</comment>
<comment type="subunit">
    <text evidence="3">V-ATPase is a heteromultimeric enzyme composed of a peripheral catalytic V1 complex (components A to H) attached to an integral membrane V0 proton pore complex (components: a, c, c'', d and e). The proteolipid components c and c'' are present as a hexameric ring that forms the proton-conducting pore. Interacts with APD2 (PubMed:22897245).</text>
</comment>
<comment type="subcellular location">
    <subcellularLocation>
        <location>Vacuole membrane</location>
        <topology>Multi-pass membrane protein</topology>
    </subcellularLocation>
    <text>Tonoplast.</text>
</comment>
<comment type="alternative products">
    <event type="alternative splicing"/>
    <isoform>
        <id>P59229-1</id>
        <name>1</name>
        <sequence type="displayed"/>
    </isoform>
    <text>A number of isoforms are produced. According to EST sequences.</text>
</comment>
<comment type="similarity">
    <text evidence="4">Belongs to the V-ATPase proteolipid subunit family.</text>
</comment>
<evidence type="ECO:0000250" key="1"/>
<evidence type="ECO:0000255" key="2"/>
<evidence type="ECO:0000269" key="3">
    <source>
    </source>
</evidence>
<evidence type="ECO:0000305" key="4"/>
<gene>
    <name type="primary">VHA-c4</name>
    <name type="synonym">AVA-P4</name>
    <name type="synonym">AVAP4</name>
    <name type="ordered locus">At1g75630</name>
    <name type="ORF">F10A5.17</name>
</gene>
<keyword id="KW-0025">Alternative splicing</keyword>
<keyword id="KW-0375">Hydrogen ion transport</keyword>
<keyword id="KW-0406">Ion transport</keyword>
<keyword id="KW-0472">Membrane</keyword>
<keyword id="KW-1185">Reference proteome</keyword>
<keyword id="KW-0812">Transmembrane</keyword>
<keyword id="KW-1133">Transmembrane helix</keyword>
<keyword id="KW-0813">Transport</keyword>
<keyword id="KW-0926">Vacuole</keyword>
<organism>
    <name type="scientific">Arabidopsis thaliana</name>
    <name type="common">Mouse-ear cress</name>
    <dbReference type="NCBI Taxonomy" id="3702"/>
    <lineage>
        <taxon>Eukaryota</taxon>
        <taxon>Viridiplantae</taxon>
        <taxon>Streptophyta</taxon>
        <taxon>Embryophyta</taxon>
        <taxon>Tracheophyta</taxon>
        <taxon>Spermatophyta</taxon>
        <taxon>Magnoliopsida</taxon>
        <taxon>eudicotyledons</taxon>
        <taxon>Gunneridae</taxon>
        <taxon>Pentapetalae</taxon>
        <taxon>rosids</taxon>
        <taxon>malvids</taxon>
        <taxon>Brassicales</taxon>
        <taxon>Brassicaceae</taxon>
        <taxon>Camelineae</taxon>
        <taxon>Arabidopsis</taxon>
    </lineage>
</organism>
<feature type="chain" id="PRO_0000071765" description="V-type proton ATPase subunit c4">
    <location>
        <begin position="1"/>
        <end position="166"/>
    </location>
</feature>
<feature type="topological domain" description="Lumenal" evidence="2">
    <location>
        <begin position="1"/>
        <end position="13"/>
    </location>
</feature>
<feature type="transmembrane region" description="Helical" evidence="2">
    <location>
        <begin position="14"/>
        <end position="34"/>
    </location>
</feature>
<feature type="topological domain" description="Cytoplasmic" evidence="2">
    <location>
        <begin position="35"/>
        <end position="56"/>
    </location>
</feature>
<feature type="transmembrane region" description="Helical" evidence="2">
    <location>
        <begin position="57"/>
        <end position="77"/>
    </location>
</feature>
<feature type="topological domain" description="Lumenal" evidence="2">
    <location>
        <begin position="78"/>
        <end position="96"/>
    </location>
</feature>
<feature type="transmembrane region" description="Helical" evidence="2">
    <location>
        <begin position="97"/>
        <end position="118"/>
    </location>
</feature>
<feature type="topological domain" description="Cytoplasmic" evidence="2">
    <location>
        <begin position="119"/>
        <end position="130"/>
    </location>
</feature>
<feature type="transmembrane region" description="Helical" evidence="2">
    <location>
        <begin position="131"/>
        <end position="156"/>
    </location>
</feature>
<feature type="topological domain" description="Lumenal" evidence="2">
    <location>
        <begin position="157"/>
        <end position="166"/>
    </location>
</feature>
<feature type="site" description="Essential for proton translocation" evidence="1">
    <location>
        <position position="143"/>
    </location>
</feature>
<proteinExistence type="evidence at protein level"/>
<dbReference type="EMBL" id="L44584">
    <property type="protein sequence ID" value="AAA99936.1"/>
    <property type="molecule type" value="mRNA"/>
</dbReference>
<dbReference type="EMBL" id="AF153677">
    <property type="protein sequence ID" value="AAD38803.1"/>
    <property type="molecule type" value="Genomic_DNA"/>
</dbReference>
<dbReference type="EMBL" id="AC006434">
    <property type="protein sequence ID" value="AAF87129.1"/>
    <property type="molecule type" value="Genomic_DNA"/>
</dbReference>
<dbReference type="EMBL" id="CP002684">
    <property type="protein sequence ID" value="AEE35739.1"/>
    <property type="molecule type" value="Genomic_DNA"/>
</dbReference>
<dbReference type="EMBL" id="AF424574">
    <property type="protein sequence ID" value="AAL11568.1"/>
    <property type="molecule type" value="mRNA"/>
</dbReference>
<dbReference type="EMBL" id="AY098985">
    <property type="protein sequence ID" value="AAM19995.1"/>
    <property type="molecule type" value="mRNA"/>
</dbReference>
<dbReference type="PIR" id="S60131">
    <property type="entry name" value="S60131"/>
</dbReference>
<dbReference type="RefSeq" id="NP_177693.1">
    <molecule id="P59229-1"/>
    <property type="nucleotide sequence ID" value="NM_106215.4"/>
</dbReference>
<dbReference type="SMR" id="P59229"/>
<dbReference type="BioGRID" id="29117">
    <property type="interactions" value="6"/>
</dbReference>
<dbReference type="FunCoup" id="P59229">
    <property type="interactions" value="3076"/>
</dbReference>
<dbReference type="IntAct" id="P59229">
    <property type="interactions" value="11"/>
</dbReference>
<dbReference type="STRING" id="3702.P59229"/>
<dbReference type="TCDB" id="3.A.2.2.5">
    <property type="family name" value="the h+- or na+-translocating f-type, v-type and a-type atpase (f-atpase) superfamily"/>
</dbReference>
<dbReference type="EnsemblPlants" id="AT1G75630.1">
    <molecule id="P59229-1"/>
    <property type="protein sequence ID" value="AT1G75630.1"/>
    <property type="gene ID" value="AT1G75630"/>
</dbReference>
<dbReference type="GeneID" id="843898"/>
<dbReference type="Gramene" id="AT1G75630.1">
    <molecule id="P59229-1"/>
    <property type="protein sequence ID" value="AT1G75630.1"/>
    <property type="gene ID" value="AT1G75630"/>
</dbReference>
<dbReference type="KEGG" id="ath:AT1G75630"/>
<dbReference type="Araport" id="AT1G75630"/>
<dbReference type="TAIR" id="AT1G75630">
    <property type="gene designation" value="AVA-P4"/>
</dbReference>
<dbReference type="HOGENOM" id="CLU_085752_1_0_1"/>
<dbReference type="InParanoid" id="P59229"/>
<dbReference type="OMA" id="KPPYAFF"/>
<dbReference type="OrthoDB" id="1106591at2759"/>
<dbReference type="PhylomeDB" id="P59229"/>
<dbReference type="PRO" id="PR:P59229"/>
<dbReference type="Proteomes" id="UP000006548">
    <property type="component" value="Chromosome 1"/>
</dbReference>
<dbReference type="ExpressionAtlas" id="P59229">
    <property type="expression patterns" value="baseline and differential"/>
</dbReference>
<dbReference type="GO" id="GO:0033179">
    <property type="term" value="C:proton-transporting V-type ATPase, V0 domain"/>
    <property type="evidence" value="ECO:0007669"/>
    <property type="project" value="InterPro"/>
</dbReference>
<dbReference type="GO" id="GO:0005774">
    <property type="term" value="C:vacuolar membrane"/>
    <property type="evidence" value="ECO:0007669"/>
    <property type="project" value="UniProtKB-SubCell"/>
</dbReference>
<dbReference type="GO" id="GO:0046961">
    <property type="term" value="F:proton-transporting ATPase activity, rotational mechanism"/>
    <property type="evidence" value="ECO:0007669"/>
    <property type="project" value="InterPro"/>
</dbReference>
<dbReference type="CDD" id="cd18175">
    <property type="entry name" value="ATP-synt_Vo_c_ATP6C_rpt1"/>
    <property type="match status" value="1"/>
</dbReference>
<dbReference type="CDD" id="cd18176">
    <property type="entry name" value="ATP-synt_Vo_c_ATP6C_rpt2"/>
    <property type="match status" value="1"/>
</dbReference>
<dbReference type="FunFam" id="1.20.120.610:FF:000003">
    <property type="entry name" value="V-type proton ATPase proteolipid subunit"/>
    <property type="match status" value="1"/>
</dbReference>
<dbReference type="Gene3D" id="1.20.120.610">
    <property type="entry name" value="lithium bound rotor ring of v- atpase"/>
    <property type="match status" value="1"/>
</dbReference>
<dbReference type="InterPro" id="IPR002379">
    <property type="entry name" value="ATPase_proteolipid_c-like_dom"/>
</dbReference>
<dbReference type="InterPro" id="IPR000245">
    <property type="entry name" value="ATPase_proteolipid_csu"/>
</dbReference>
<dbReference type="InterPro" id="IPR011555">
    <property type="entry name" value="ATPase_proteolipid_su_C_euk"/>
</dbReference>
<dbReference type="InterPro" id="IPR035921">
    <property type="entry name" value="F/V-ATP_Csub_sf"/>
</dbReference>
<dbReference type="NCBIfam" id="TIGR01100">
    <property type="entry name" value="V_ATP_synt_C"/>
    <property type="match status" value="1"/>
</dbReference>
<dbReference type="PANTHER" id="PTHR10263">
    <property type="entry name" value="V-TYPE PROTON ATPASE PROTEOLIPID SUBUNIT"/>
    <property type="match status" value="1"/>
</dbReference>
<dbReference type="Pfam" id="PF00137">
    <property type="entry name" value="ATP-synt_C"/>
    <property type="match status" value="2"/>
</dbReference>
<dbReference type="PRINTS" id="PR00122">
    <property type="entry name" value="VACATPASE"/>
</dbReference>
<dbReference type="SUPFAM" id="SSF81333">
    <property type="entry name" value="F1F0 ATP synthase subunit C"/>
    <property type="match status" value="2"/>
</dbReference>
<sequence>MASSGFSGDETAPFFGFLGAAAALVFSCMGAAYGTAKSGVGVASMGVMRPELVMKSIVPVVMAGVLGIYGLIIAVIISTGINPKAKSYYLFDGYAHLSSGLACGLAGLSAGMAIGIVGDAGVRANAQQPKLFVGMILILIFAEALALYGLIVGIILSSRAGQSRAE</sequence>
<accession>P59229</accession>
<accession>Q39037</accession>
<accession>Q39038</accession>
<accession>Q39039</accession>
<accession>Q42424</accession>
<accession>Q944R9</accession>
<accession>Q96298</accession>